<keyword id="KW-0002">3D-structure</keyword>
<keyword id="KW-0255">Endonuclease</keyword>
<keyword id="KW-0378">Hydrolase</keyword>
<keyword id="KW-0460">Magnesium</keyword>
<keyword id="KW-0479">Metal-binding</keyword>
<keyword id="KW-0540">Nuclease</keyword>
<keyword id="KW-0680">Restriction system</keyword>
<protein>
    <recommendedName>
        <fullName evidence="2">Type II restriction enzyme BglII</fullName>
        <shortName>R.BglII</shortName>
        <ecNumber evidence="1">3.1.21.4</ecNumber>
    </recommendedName>
    <alternativeName>
        <fullName>Endonuclease BglII</fullName>
    </alternativeName>
    <alternativeName>
        <fullName>Type-2 restriction enzyme BglII</fullName>
    </alternativeName>
</protein>
<proteinExistence type="evidence at protein level"/>
<name>T2B2_BACIU</name>
<evidence type="ECO:0000269" key="1">
    <source>
    </source>
</evidence>
<evidence type="ECO:0000303" key="2">
    <source>
    </source>
</evidence>
<evidence type="ECO:0007829" key="3">
    <source>
        <dbReference type="PDB" id="1DFM"/>
    </source>
</evidence>
<comment type="function">
    <text evidence="1 2">A P subtype restriction enzyme that recognizes the double-stranded sequence 5'-AGATCT-3' and cleaves after A-1.</text>
</comment>
<comment type="catalytic activity">
    <reaction evidence="1">
        <text>Endonucleolytic cleavage of DNA to give specific double-stranded fragments with terminal 5'-phosphates.</text>
        <dbReference type="EC" id="3.1.21.4"/>
    </reaction>
</comment>
<comment type="cofactor">
    <cofactor>
        <name>Mg(2+)</name>
        <dbReference type="ChEBI" id="CHEBI:18420"/>
    </cofactor>
    <text evidence="1">Binds 1 Mg(2+) ion per subunit.</text>
</comment>
<comment type="subunit">
    <text evidence="1">Homodimer.</text>
</comment>
<reference key="1">
    <citation type="journal article" date="1997" name="Gene">
        <title>Cloning and characterization of the BglII restriction-modification system reveals a possible evolutionary footprint.</title>
        <authorList>
            <person name="Anton B.P."/>
            <person name="Heiter D.F."/>
            <person name="Benner J.S."/>
            <person name="Hess E.J."/>
            <person name="Greenough L."/>
            <person name="Moran L.S."/>
            <person name="Slatko B.E."/>
            <person name="Brooks J.E."/>
        </authorList>
    </citation>
    <scope>NUCLEOTIDE SEQUENCE [GENOMIC DNA]</scope>
    <source>
        <strain>Globigii / RUB562</strain>
    </source>
</reference>
<reference key="2">
    <citation type="journal article" date="2003" name="Nucleic Acids Res.">
        <title>A nomenclature for restriction enzymes, DNA methyltransferases, homing endonucleases and their genes.</title>
        <authorList>
            <person name="Roberts R.J."/>
            <person name="Belfort M."/>
            <person name="Bestor T."/>
            <person name="Bhagwat A.S."/>
            <person name="Bickle T.A."/>
            <person name="Bitinaite J."/>
            <person name="Blumenthal R.M."/>
            <person name="Degtyarev S.K."/>
            <person name="Dryden D.T."/>
            <person name="Dybvig K."/>
            <person name="Firman K."/>
            <person name="Gromova E.S."/>
            <person name="Gumport R.I."/>
            <person name="Halford S.E."/>
            <person name="Hattman S."/>
            <person name="Heitman J."/>
            <person name="Hornby D.P."/>
            <person name="Janulaitis A."/>
            <person name="Jeltsch A."/>
            <person name="Josephsen J."/>
            <person name="Kiss A."/>
            <person name="Klaenhammer T.R."/>
            <person name="Kobayashi I."/>
            <person name="Kong H."/>
            <person name="Krueger D.H."/>
            <person name="Lacks S."/>
            <person name="Marinus M.G."/>
            <person name="Miyahara M."/>
            <person name="Morgan R.D."/>
            <person name="Murray N.E."/>
            <person name="Nagaraja V."/>
            <person name="Piekarowicz A."/>
            <person name="Pingoud A."/>
            <person name="Raleigh E."/>
            <person name="Rao D.N."/>
            <person name="Reich N."/>
            <person name="Repin V.E."/>
            <person name="Selker E.U."/>
            <person name="Shaw P.C."/>
            <person name="Stein D.C."/>
            <person name="Stoddard B.L."/>
            <person name="Szybalski W."/>
            <person name="Trautner T.A."/>
            <person name="Van Etten J.L."/>
            <person name="Vitor J.M."/>
            <person name="Wilson G.G."/>
            <person name="Xu S.Y."/>
        </authorList>
    </citation>
    <scope>NOMENCLATURE</scope>
    <scope>SUBTYPE</scope>
</reference>
<reference key="3">
    <citation type="journal article" date="2000" name="Nat. Struct. Biol.">
        <title>Understanding the immutability of restriction enzymes: crystal structure of BglII and its DNA substrate at 1.5 A resolution.</title>
        <authorList>
            <person name="Lukacs C.M."/>
            <person name="Kucera R."/>
            <person name="Schildkraut I."/>
            <person name="Aggarwal A.K."/>
        </authorList>
    </citation>
    <scope>X-RAY CRYSTALLOGRAPHY (1.7 ANGSTROMS)</scope>
</reference>
<gene>
    <name type="primary">bglIIR</name>
</gene>
<sequence length="223" mass="25763">MKIDITDYNHADEILNPQLWKEIEETLLKMPLHVKASDQASKVGSLIFDPVGTNQYIKDELVPKHWKNNIPIPKRFDFLGTDIDFGKRDTLVEVQFSNYPFLLNNTVRSELFHKSNMDIDEEGMKVAIIITKGHMFPASNSSLYYEQAQNQLNSLAEYNVFDVPIRLVGLIEDFETDIDIVSTTYADKRYSRTITKRDTVKGKVIDTNTPNTRRRKRGTIVTY</sequence>
<dbReference type="EC" id="3.1.21.4" evidence="1"/>
<dbReference type="EMBL" id="U49842">
    <property type="protein sequence ID" value="AAC45060.1"/>
    <property type="molecule type" value="Genomic_DNA"/>
</dbReference>
<dbReference type="PIR" id="JC6323">
    <property type="entry name" value="JC6323"/>
</dbReference>
<dbReference type="PDB" id="1D2I">
    <property type="method" value="X-ray"/>
    <property type="resolution" value="1.70 A"/>
    <property type="chains" value="A/B=1-223"/>
</dbReference>
<dbReference type="PDB" id="1DFM">
    <property type="method" value="X-ray"/>
    <property type="resolution" value="1.50 A"/>
    <property type="chains" value="A/B=1-223"/>
</dbReference>
<dbReference type="PDB" id="1ES8">
    <property type="method" value="X-ray"/>
    <property type="resolution" value="2.30 A"/>
    <property type="chains" value="A=1-223"/>
</dbReference>
<dbReference type="PDBsum" id="1D2I"/>
<dbReference type="PDBsum" id="1DFM"/>
<dbReference type="PDBsum" id="1ES8"/>
<dbReference type="SMR" id="Q45488"/>
<dbReference type="BRENDA" id="3.1.21.4">
    <property type="organism ID" value="658"/>
</dbReference>
<dbReference type="EvolutionaryTrace" id="Q45488"/>
<dbReference type="PRO" id="PR:Q45488"/>
<dbReference type="GO" id="GO:0003677">
    <property type="term" value="F:DNA binding"/>
    <property type="evidence" value="ECO:0007669"/>
    <property type="project" value="InterPro"/>
</dbReference>
<dbReference type="GO" id="GO:0000287">
    <property type="term" value="F:magnesium ion binding"/>
    <property type="evidence" value="ECO:0007669"/>
    <property type="project" value="InterPro"/>
</dbReference>
<dbReference type="GO" id="GO:0009036">
    <property type="term" value="F:type II site-specific deoxyribonuclease activity"/>
    <property type="evidence" value="ECO:0007669"/>
    <property type="project" value="UniProtKB-EC"/>
</dbReference>
<dbReference type="GO" id="GO:0009307">
    <property type="term" value="P:DNA restriction-modification system"/>
    <property type="evidence" value="ECO:0007669"/>
    <property type="project" value="UniProtKB-KW"/>
</dbReference>
<dbReference type="CDD" id="cd22312">
    <property type="entry name" value="BglII-like"/>
    <property type="match status" value="1"/>
</dbReference>
<dbReference type="Gene3D" id="3.40.91.20">
    <property type="match status" value="1"/>
</dbReference>
<dbReference type="InterPro" id="IPR011338">
    <property type="entry name" value="BamHI/BglII/BstY"/>
</dbReference>
<dbReference type="InterPro" id="IPR011335">
    <property type="entry name" value="Restrct_endonuc-II-like"/>
</dbReference>
<dbReference type="SUPFAM" id="SSF52980">
    <property type="entry name" value="Restriction endonuclease-like"/>
    <property type="match status" value="1"/>
</dbReference>
<accession>Q45488</accession>
<organism>
    <name type="scientific">Bacillus subtilis</name>
    <dbReference type="NCBI Taxonomy" id="1423"/>
    <lineage>
        <taxon>Bacteria</taxon>
        <taxon>Bacillati</taxon>
        <taxon>Bacillota</taxon>
        <taxon>Bacilli</taxon>
        <taxon>Bacillales</taxon>
        <taxon>Bacillaceae</taxon>
        <taxon>Bacillus</taxon>
    </lineage>
</organism>
<feature type="chain" id="PRO_0000077286" description="Type II restriction enzyme BglII">
    <location>
        <begin position="1"/>
        <end position="223"/>
    </location>
</feature>
<feature type="binding site">
    <location>
        <position position="84"/>
    </location>
    <ligand>
        <name>Mg(2+)</name>
        <dbReference type="ChEBI" id="CHEBI:18420"/>
    </ligand>
</feature>
<feature type="binding site">
    <location>
        <position position="94"/>
    </location>
    <ligand>
        <name>Mg(2+)</name>
        <dbReference type="ChEBI" id="CHEBI:18420"/>
    </ligand>
</feature>
<feature type="strand" evidence="3">
    <location>
        <begin position="2"/>
        <end position="8"/>
    </location>
</feature>
<feature type="helix" evidence="3">
    <location>
        <begin position="11"/>
        <end position="14"/>
    </location>
</feature>
<feature type="helix" evidence="3">
    <location>
        <begin position="17"/>
        <end position="29"/>
    </location>
</feature>
<feature type="strand" evidence="3">
    <location>
        <begin position="32"/>
        <end position="36"/>
    </location>
</feature>
<feature type="strand" evidence="3">
    <location>
        <begin position="46"/>
        <end position="48"/>
    </location>
</feature>
<feature type="helix" evidence="3">
    <location>
        <begin position="50"/>
        <end position="61"/>
    </location>
</feature>
<feature type="helix" evidence="3">
    <location>
        <begin position="62"/>
        <end position="64"/>
    </location>
</feature>
<feature type="strand" evidence="3">
    <location>
        <begin position="67"/>
        <end position="71"/>
    </location>
</feature>
<feature type="helix" evidence="3">
    <location>
        <begin position="74"/>
        <end position="79"/>
    </location>
</feature>
<feature type="strand" evidence="3">
    <location>
        <begin position="81"/>
        <end position="87"/>
    </location>
</feature>
<feature type="strand" evidence="3">
    <location>
        <begin position="90"/>
        <end position="94"/>
    </location>
</feature>
<feature type="helix" evidence="3">
    <location>
        <begin position="100"/>
        <end position="115"/>
    </location>
</feature>
<feature type="strand" evidence="3">
    <location>
        <begin position="118"/>
        <end position="123"/>
    </location>
</feature>
<feature type="strand" evidence="3">
    <location>
        <begin position="126"/>
        <end position="132"/>
    </location>
</feature>
<feature type="helix" evidence="3">
    <location>
        <begin position="145"/>
        <end position="157"/>
    </location>
</feature>
<feature type="strand" evidence="3">
    <location>
        <begin position="165"/>
        <end position="171"/>
    </location>
</feature>
<feature type="strand" evidence="3">
    <location>
        <begin position="178"/>
        <end position="190"/>
    </location>
</feature>
<feature type="strand" evidence="3">
    <location>
        <begin position="194"/>
        <end position="205"/>
    </location>
</feature>
<feature type="strand" evidence="3">
    <location>
        <begin position="219"/>
        <end position="222"/>
    </location>
</feature>